<dbReference type="EMBL" id="DQ154113">
    <property type="protein sequence ID" value="AAZ81568.1"/>
    <property type="molecule type" value="mRNA"/>
</dbReference>
<dbReference type="EMBL" id="L27102">
    <property type="protein sequence ID" value="AAA30652.1"/>
    <property type="molecule type" value="mRNA"/>
</dbReference>
<dbReference type="RefSeq" id="NP_001074202.1">
    <property type="nucleotide sequence ID" value="NM_001080733.1"/>
</dbReference>
<dbReference type="RefSeq" id="XP_005205909.1">
    <property type="nucleotide sequence ID" value="XM_005205852.5"/>
</dbReference>
<dbReference type="SMR" id="P41985"/>
<dbReference type="FunCoup" id="P41985">
    <property type="interactions" value="294"/>
</dbReference>
<dbReference type="STRING" id="9913.ENSBTAP00000019534"/>
<dbReference type="BindingDB" id="P41985"/>
<dbReference type="GlyCosmos" id="P41985">
    <property type="glycosylation" value="3 sites, No reported glycans"/>
</dbReference>
<dbReference type="GlyGen" id="P41985">
    <property type="glycosylation" value="3 sites"/>
</dbReference>
<dbReference type="PaxDb" id="9913-ENSBTAP00000019534"/>
<dbReference type="Ensembl" id="ENSBTAT00000019534.5">
    <property type="protein sequence ID" value="ENSBTAP00000019534.3"/>
    <property type="gene ID" value="ENSBTAG00000014674.5"/>
</dbReference>
<dbReference type="Ensembl" id="ENSBTAT00000135328.1">
    <property type="protein sequence ID" value="ENSBTAP00000086722.1"/>
    <property type="gene ID" value="ENSBTAG00000014674.5"/>
</dbReference>
<dbReference type="GeneID" id="522170"/>
<dbReference type="KEGG" id="bta:522170"/>
<dbReference type="CTD" id="1129"/>
<dbReference type="VEuPathDB" id="HostDB:ENSBTAG00000014674"/>
<dbReference type="VGNC" id="VGNC:27319">
    <property type="gene designation" value="CHRM2"/>
</dbReference>
<dbReference type="eggNOG" id="KOG4220">
    <property type="taxonomic scope" value="Eukaryota"/>
</dbReference>
<dbReference type="GeneTree" id="ENSGT00940000158940"/>
<dbReference type="HOGENOM" id="CLU_009579_11_2_1"/>
<dbReference type="InParanoid" id="P41985"/>
<dbReference type="OMA" id="TSERQNH"/>
<dbReference type="OrthoDB" id="10071887at2759"/>
<dbReference type="TreeFam" id="TF320495"/>
<dbReference type="Reactome" id="R-BTA-390648">
    <property type="pathway name" value="Muscarinic acetylcholine receptors"/>
</dbReference>
<dbReference type="Reactome" id="R-BTA-418594">
    <property type="pathway name" value="G alpha (i) signalling events"/>
</dbReference>
<dbReference type="Reactome" id="R-BTA-8856825">
    <property type="pathway name" value="Cargo recognition for clathrin-mediated endocytosis"/>
</dbReference>
<dbReference type="Reactome" id="R-BTA-8856828">
    <property type="pathway name" value="Clathrin-mediated endocytosis"/>
</dbReference>
<dbReference type="Proteomes" id="UP000009136">
    <property type="component" value="Chromosome 4"/>
</dbReference>
<dbReference type="Bgee" id="ENSBTAG00000014674">
    <property type="expression patterns" value="Expressed in myometrium and 37 other cell types or tissues"/>
</dbReference>
<dbReference type="GO" id="GO:0030425">
    <property type="term" value="C:dendrite"/>
    <property type="evidence" value="ECO:0000318"/>
    <property type="project" value="GO_Central"/>
</dbReference>
<dbReference type="GO" id="GO:0005886">
    <property type="term" value="C:plasma membrane"/>
    <property type="evidence" value="ECO:0000250"/>
    <property type="project" value="UniProtKB"/>
</dbReference>
<dbReference type="GO" id="GO:0045211">
    <property type="term" value="C:postsynaptic membrane"/>
    <property type="evidence" value="ECO:0007669"/>
    <property type="project" value="UniProtKB-SubCell"/>
</dbReference>
<dbReference type="GO" id="GO:0045202">
    <property type="term" value="C:synapse"/>
    <property type="evidence" value="ECO:0000318"/>
    <property type="project" value="GO_Central"/>
</dbReference>
<dbReference type="GO" id="GO:0016907">
    <property type="term" value="F:G protein-coupled acetylcholine receptor activity"/>
    <property type="evidence" value="ECO:0000250"/>
    <property type="project" value="UniProtKB"/>
</dbReference>
<dbReference type="GO" id="GO:0007197">
    <property type="term" value="P:adenylate cyclase-inhibiting G protein-coupled acetylcholine receptor signaling pathway"/>
    <property type="evidence" value="ECO:0000318"/>
    <property type="project" value="GO_Central"/>
</dbReference>
<dbReference type="GO" id="GO:0007268">
    <property type="term" value="P:chemical synaptic transmission"/>
    <property type="evidence" value="ECO:0000318"/>
    <property type="project" value="GO_Central"/>
</dbReference>
<dbReference type="GO" id="GO:0007213">
    <property type="term" value="P:G protein-coupled acetylcholine receptor signaling pathway"/>
    <property type="evidence" value="ECO:0000250"/>
    <property type="project" value="UniProtKB"/>
</dbReference>
<dbReference type="GO" id="GO:0007187">
    <property type="term" value="P:G protein-coupled receptor signaling pathway, coupled to cyclic nucleotide second messenger"/>
    <property type="evidence" value="ECO:0000318"/>
    <property type="project" value="GO_Central"/>
</dbReference>
<dbReference type="GO" id="GO:0008016">
    <property type="term" value="P:regulation of heart contraction"/>
    <property type="evidence" value="ECO:0007669"/>
    <property type="project" value="InterPro"/>
</dbReference>
<dbReference type="GO" id="GO:0006940">
    <property type="term" value="P:regulation of smooth muscle contraction"/>
    <property type="evidence" value="ECO:0000318"/>
    <property type="project" value="GO_Central"/>
</dbReference>
<dbReference type="CDD" id="cd15297">
    <property type="entry name" value="7tmA_mAChR_M2"/>
    <property type="match status" value="1"/>
</dbReference>
<dbReference type="FunFam" id="1.20.1070.10:FF:000038">
    <property type="entry name" value="Muscarinic acetylcholine receptor"/>
    <property type="match status" value="1"/>
</dbReference>
<dbReference type="FunFam" id="1.20.1070.10:FF:000041">
    <property type="entry name" value="Muscarinic acetylcholine receptor"/>
    <property type="match status" value="1"/>
</dbReference>
<dbReference type="Gene3D" id="1.20.1070.10">
    <property type="entry name" value="Rhodopsin 7-helix transmembrane proteins"/>
    <property type="match status" value="2"/>
</dbReference>
<dbReference type="InterPro" id="IPR000276">
    <property type="entry name" value="GPCR_Rhodpsn"/>
</dbReference>
<dbReference type="InterPro" id="IPR017452">
    <property type="entry name" value="GPCR_Rhodpsn_7TM"/>
</dbReference>
<dbReference type="InterPro" id="IPR001065">
    <property type="entry name" value="Musac_Ach_M2_rcpt"/>
</dbReference>
<dbReference type="InterPro" id="IPR000995">
    <property type="entry name" value="Musac_Ach_rcpt"/>
</dbReference>
<dbReference type="PANTHER" id="PTHR24247">
    <property type="entry name" value="5-HYDROXYTRYPTAMINE RECEPTOR"/>
    <property type="match status" value="1"/>
</dbReference>
<dbReference type="PANTHER" id="PTHR24247:SF207">
    <property type="entry name" value="MUSCARINIC ACETYLCHOLINE RECEPTOR M2"/>
    <property type="match status" value="1"/>
</dbReference>
<dbReference type="Pfam" id="PF00001">
    <property type="entry name" value="7tm_1"/>
    <property type="match status" value="1"/>
</dbReference>
<dbReference type="PRINTS" id="PR00237">
    <property type="entry name" value="GPCRRHODOPSN"/>
</dbReference>
<dbReference type="PRINTS" id="PR00243">
    <property type="entry name" value="MUSCARINICR"/>
</dbReference>
<dbReference type="PRINTS" id="PR00539">
    <property type="entry name" value="MUSCRINICM2R"/>
</dbReference>
<dbReference type="SUPFAM" id="SSF81321">
    <property type="entry name" value="Family A G protein-coupled receptor-like"/>
    <property type="match status" value="1"/>
</dbReference>
<dbReference type="PROSITE" id="PS00237">
    <property type="entry name" value="G_PROTEIN_RECEP_F1_1"/>
    <property type="match status" value="1"/>
</dbReference>
<dbReference type="PROSITE" id="PS50262">
    <property type="entry name" value="G_PROTEIN_RECEP_F1_2"/>
    <property type="match status" value="1"/>
</dbReference>
<protein>
    <recommendedName>
        <fullName>Muscarinic acetylcholine receptor M2</fullName>
    </recommendedName>
</protein>
<organism>
    <name type="scientific">Bos taurus</name>
    <name type="common">Bovine</name>
    <dbReference type="NCBI Taxonomy" id="9913"/>
    <lineage>
        <taxon>Eukaryota</taxon>
        <taxon>Metazoa</taxon>
        <taxon>Chordata</taxon>
        <taxon>Craniata</taxon>
        <taxon>Vertebrata</taxon>
        <taxon>Euteleostomi</taxon>
        <taxon>Mammalia</taxon>
        <taxon>Eutheria</taxon>
        <taxon>Laurasiatheria</taxon>
        <taxon>Artiodactyla</taxon>
        <taxon>Ruminantia</taxon>
        <taxon>Pecora</taxon>
        <taxon>Bovidae</taxon>
        <taxon>Bovinae</taxon>
        <taxon>Bos</taxon>
    </lineage>
</organism>
<sequence length="465" mass="51613">MNNSTNSSNNVALTSPYKTFEVVFIVLVAGSLSLVTIIGNILVMVSIKVNRHLQTVNNYFLFSLACADLIIGVFSMNLYTLYTVIGYWPLGPVVCDLWLALDYVVSNASVMNLLIISFDRYFCVTKPLTYPVKRTTKMAGMMIAAAWVLSFILWAPAILFWQFIVGVRTVEDGECYIQFFSNAAVTFGTAIAAFYLPVIIMTVLYWHISRASKSRIKKDKKEPVANQDPVSPSLVQGRIVKPNNNNMPGSDDGLEHNKIQNGKTPRDAVTENCVQGEEKESSNDSTSVSAVASNMRDDEITQDENTVSTSVGHSKDENSKQTCIKIVTKTPKGDQCTPTNTTVELVGSSGQNGDEKQNIVARKIVKMTKQPAKKKPPPSREKKVTRTILAILLAFIITWAPYNVMVLINTFCAPCIPNTVWTIGYWLCYINSTINPACYALCNATFKKTFKHLLMCHYKNIGATR</sequence>
<keyword id="KW-1003">Cell membrane</keyword>
<keyword id="KW-1015">Disulfide bond</keyword>
<keyword id="KW-0297">G-protein coupled receptor</keyword>
<keyword id="KW-0325">Glycoprotein</keyword>
<keyword id="KW-0472">Membrane</keyword>
<keyword id="KW-0597">Phosphoprotein</keyword>
<keyword id="KW-0628">Postsynaptic cell membrane</keyword>
<keyword id="KW-0675">Receptor</keyword>
<keyword id="KW-1185">Reference proteome</keyword>
<keyword id="KW-0770">Synapse</keyword>
<keyword id="KW-0807">Transducer</keyword>
<keyword id="KW-0812">Transmembrane</keyword>
<keyword id="KW-1133">Transmembrane helix</keyword>
<evidence type="ECO:0000250" key="1"/>
<evidence type="ECO:0000250" key="2">
    <source>
        <dbReference type="UniProtKB" id="Q9ERZ4"/>
    </source>
</evidence>
<evidence type="ECO:0000255" key="3"/>
<evidence type="ECO:0000255" key="4">
    <source>
        <dbReference type="PROSITE-ProRule" id="PRU00521"/>
    </source>
</evidence>
<evidence type="ECO:0000256" key="5">
    <source>
        <dbReference type="SAM" id="MobiDB-lite"/>
    </source>
</evidence>
<comment type="function">
    <text evidence="1">The muscarinic acetylcholine receptor mediates various cellular responses, including inhibition of adenylate cyclase, breakdown of phosphoinositides and modulation of potassium channels through the action of G proteins. Primary transducing effect is adenylate cyclase inhibition. Signaling promotes phospholipase C activity, leading to the release of inositol trisphosphate (IP3); this then triggers calcium ion release into the cytosol (By similarity).</text>
</comment>
<comment type="subunit">
    <text evidence="1">Interacts with ARRB1 and ARRB2. Interacts with RACK1; the interaction regulates CHRM2 internalization (By similarity).</text>
</comment>
<comment type="subcellular location">
    <subcellularLocation>
        <location evidence="1">Cell membrane</location>
        <topology evidence="1">Multi-pass membrane protein</topology>
    </subcellularLocation>
    <subcellularLocation>
        <location evidence="1">Postsynaptic cell membrane</location>
        <topology evidence="1">Multi-pass membrane protein</topology>
    </subcellularLocation>
    <text evidence="1">Phosphorylation in response to agonist binding promotes receptor internalization.</text>
</comment>
<comment type="PTM">
    <text evidence="1">Phosphorylated in response to agonist treatment.</text>
</comment>
<comment type="similarity">
    <text evidence="4">Belongs to the G-protein coupled receptor 1 family. Muscarinic acetylcholine receptor subfamily. CHRM2 sub-subfamily.</text>
</comment>
<gene>
    <name type="primary">CHRM2</name>
</gene>
<proteinExistence type="evidence at transcript level"/>
<name>ACM2_BOVIN</name>
<accession>P41985</accession>
<accession>Q3Y686</accession>
<feature type="chain" id="PRO_0000069020" description="Muscarinic acetylcholine receptor M2">
    <location>
        <begin position="1"/>
        <end position="465"/>
    </location>
</feature>
<feature type="topological domain" description="Extracellular" evidence="1">
    <location>
        <begin position="1"/>
        <end position="21"/>
    </location>
</feature>
<feature type="transmembrane region" description="Helical; Name=1" evidence="1">
    <location>
        <begin position="22"/>
        <end position="44"/>
    </location>
</feature>
<feature type="topological domain" description="Cytoplasmic" evidence="1">
    <location>
        <begin position="45"/>
        <end position="58"/>
    </location>
</feature>
<feature type="transmembrane region" description="Helical; Name=2" evidence="1">
    <location>
        <begin position="59"/>
        <end position="79"/>
    </location>
</feature>
<feature type="topological domain" description="Extracellular" evidence="1">
    <location>
        <begin position="80"/>
        <end position="96"/>
    </location>
</feature>
<feature type="transmembrane region" description="Helical; Name=3" evidence="1">
    <location>
        <begin position="97"/>
        <end position="118"/>
    </location>
</feature>
<feature type="topological domain" description="Cytoplasmic" evidence="1">
    <location>
        <begin position="119"/>
        <end position="138"/>
    </location>
</feature>
<feature type="transmembrane region" description="Helical; Name=4" evidence="1">
    <location>
        <begin position="139"/>
        <end position="161"/>
    </location>
</feature>
<feature type="topological domain" description="Extracellular" evidence="1">
    <location>
        <begin position="162"/>
        <end position="183"/>
    </location>
</feature>
<feature type="transmembrane region" description="Helical; Name=5" evidence="1">
    <location>
        <begin position="184"/>
        <end position="208"/>
    </location>
</feature>
<feature type="topological domain" description="Cytoplasmic" evidence="1">
    <location>
        <begin position="209"/>
        <end position="386"/>
    </location>
</feature>
<feature type="transmembrane region" description="Helical; Name=6" evidence="1">
    <location>
        <begin position="387"/>
        <end position="409"/>
    </location>
</feature>
<feature type="topological domain" description="Extracellular" evidence="1">
    <location>
        <begin position="410"/>
        <end position="417"/>
    </location>
</feature>
<feature type="transmembrane region" description="Helical; Name=7" evidence="1">
    <location>
        <begin position="418"/>
        <end position="441"/>
    </location>
</feature>
<feature type="topological domain" description="Cytoplasmic" evidence="1">
    <location>
        <begin position="442"/>
        <end position="465"/>
    </location>
</feature>
<feature type="region of interest" description="Disordered" evidence="5">
    <location>
        <begin position="217"/>
        <end position="319"/>
    </location>
</feature>
<feature type="short sequence motif" description="Important for signaling">
    <location>
        <begin position="119"/>
        <end position="121"/>
    </location>
</feature>
<feature type="short sequence motif" description="Important for signaling">
    <location>
        <begin position="435"/>
        <end position="439"/>
    </location>
</feature>
<feature type="compositionally biased region" description="Basic and acidic residues" evidence="5">
    <location>
        <begin position="253"/>
        <end position="269"/>
    </location>
</feature>
<feature type="compositionally biased region" description="Polar residues" evidence="5">
    <location>
        <begin position="283"/>
        <end position="292"/>
    </location>
</feature>
<feature type="compositionally biased region" description="Polar residues" evidence="5">
    <location>
        <begin position="303"/>
        <end position="312"/>
    </location>
</feature>
<feature type="modified residue" description="Phosphoserine" evidence="2">
    <location>
        <position position="231"/>
    </location>
</feature>
<feature type="modified residue" description="Phosphothreonine" evidence="3">
    <location>
        <position position="445"/>
    </location>
</feature>
<feature type="modified residue" description="Phosphothreonine" evidence="3">
    <location>
        <position position="449"/>
    </location>
</feature>
<feature type="modified residue" description="Phosphothreonine" evidence="3">
    <location>
        <position position="464"/>
    </location>
</feature>
<feature type="glycosylation site" description="N-linked (GlcNAc...) asparagine" evidence="3">
    <location>
        <position position="2"/>
    </location>
</feature>
<feature type="glycosylation site" description="N-linked (GlcNAc...) asparagine" evidence="3">
    <location>
        <position position="3"/>
    </location>
</feature>
<feature type="glycosylation site" description="N-linked (GlcNAc...) asparagine" evidence="3">
    <location>
        <position position="6"/>
    </location>
</feature>
<feature type="disulfide bond" evidence="4">
    <location>
        <begin position="95"/>
        <end position="175"/>
    </location>
</feature>
<feature type="disulfide bond" evidence="4">
    <location>
        <begin position="412"/>
        <end position="415"/>
    </location>
</feature>
<reference key="1">
    <citation type="submission" date="2005-08" db="EMBL/GenBank/DDBJ databases">
        <title>Ion channels in ocular epithelia.</title>
        <authorList>
            <person name="Rae J.L."/>
        </authorList>
    </citation>
    <scope>NUCLEOTIDE SEQUENCE [MRNA]</scope>
    <source>
        <tissue>Corneal endothelium</tissue>
    </source>
</reference>
<reference key="2">
    <citation type="submission" date="1994-01" db="EMBL/GenBank/DDBJ databases">
        <title>Presence of multiple muscarinic receptor subtypes in bovine chromaffin cells - analysis by polymerase chain reaction.</title>
        <authorList>
            <person name="Sui A.-L."/>
            <person name="Chou W.-Y."/>
            <person name="Kao L.-S."/>
        </authorList>
    </citation>
    <scope>NUCLEOTIDE SEQUENCE [MRNA] OF 247-373</scope>
    <source>
        <tissue>Adrenal gland</tissue>
    </source>
</reference>